<feature type="chain" id="PRO_0000109572" description="Putative HTH-type transcriptional regulator BadM">
    <location>
        <begin position="1"/>
        <end position="156"/>
    </location>
</feature>
<feature type="domain" description="HTH rrf2-type" evidence="1">
    <location>
        <begin position="4"/>
        <end position="130"/>
    </location>
</feature>
<feature type="region of interest" description="Disordered" evidence="2">
    <location>
        <begin position="136"/>
        <end position="156"/>
    </location>
</feature>
<feature type="compositionally biased region" description="Low complexity" evidence="2">
    <location>
        <begin position="145"/>
        <end position="156"/>
    </location>
</feature>
<accession>O07465</accession>
<dbReference type="EMBL" id="U75364">
    <property type="protein sequence ID" value="AAC13361.1"/>
    <property type="molecule type" value="Genomic_DNA"/>
</dbReference>
<dbReference type="EMBL" id="BX572595">
    <property type="protein sequence ID" value="CAE26107.1"/>
    <property type="molecule type" value="Genomic_DNA"/>
</dbReference>
<dbReference type="SMR" id="O07465"/>
<dbReference type="STRING" id="258594.RPA0663"/>
<dbReference type="eggNOG" id="COG1959">
    <property type="taxonomic scope" value="Bacteria"/>
</dbReference>
<dbReference type="HOGENOM" id="CLU_107144_2_1_5"/>
<dbReference type="PhylomeDB" id="O07465"/>
<dbReference type="GO" id="GO:0005829">
    <property type="term" value="C:cytosol"/>
    <property type="evidence" value="ECO:0007669"/>
    <property type="project" value="TreeGrafter"/>
</dbReference>
<dbReference type="GO" id="GO:0003677">
    <property type="term" value="F:DNA binding"/>
    <property type="evidence" value="ECO:0007669"/>
    <property type="project" value="UniProtKB-KW"/>
</dbReference>
<dbReference type="GO" id="GO:0003700">
    <property type="term" value="F:DNA-binding transcription factor activity"/>
    <property type="evidence" value="ECO:0007669"/>
    <property type="project" value="TreeGrafter"/>
</dbReference>
<dbReference type="Gene3D" id="1.10.10.10">
    <property type="entry name" value="Winged helix-like DNA-binding domain superfamily/Winged helix DNA-binding domain"/>
    <property type="match status" value="1"/>
</dbReference>
<dbReference type="InterPro" id="IPR030489">
    <property type="entry name" value="TR_Rrf2-type_CS"/>
</dbReference>
<dbReference type="InterPro" id="IPR000944">
    <property type="entry name" value="Tscrpt_reg_Rrf2"/>
</dbReference>
<dbReference type="InterPro" id="IPR036388">
    <property type="entry name" value="WH-like_DNA-bd_sf"/>
</dbReference>
<dbReference type="InterPro" id="IPR036390">
    <property type="entry name" value="WH_DNA-bd_sf"/>
</dbReference>
<dbReference type="NCBIfam" id="TIGR00738">
    <property type="entry name" value="rrf2_super"/>
    <property type="match status" value="1"/>
</dbReference>
<dbReference type="PANTHER" id="PTHR33221:SF4">
    <property type="entry name" value="HTH-TYPE TRANSCRIPTIONAL REPRESSOR NSRR"/>
    <property type="match status" value="1"/>
</dbReference>
<dbReference type="PANTHER" id="PTHR33221">
    <property type="entry name" value="WINGED HELIX-TURN-HELIX TRANSCRIPTIONAL REGULATOR, RRF2 FAMILY"/>
    <property type="match status" value="1"/>
</dbReference>
<dbReference type="Pfam" id="PF02082">
    <property type="entry name" value="Rrf2"/>
    <property type="match status" value="1"/>
</dbReference>
<dbReference type="SUPFAM" id="SSF46785">
    <property type="entry name" value="Winged helix' DNA-binding domain"/>
    <property type="match status" value="1"/>
</dbReference>
<dbReference type="PROSITE" id="PS01332">
    <property type="entry name" value="HTH_RRF2_1"/>
    <property type="match status" value="1"/>
</dbReference>
<dbReference type="PROSITE" id="PS51197">
    <property type="entry name" value="HTH_RRF2_2"/>
    <property type="match status" value="1"/>
</dbReference>
<reference key="1">
    <citation type="journal article" date="1997" name="Proc. Natl. Acad. Sci. U.S.A.">
        <title>A cluster of bacterial genes for anaerobic benzene ring biodegradation.</title>
        <authorList>
            <person name="Egland P.G."/>
            <person name="Pelletier D.A."/>
            <person name="Dispensa M."/>
            <person name="Gibson J."/>
            <person name="Harwood C.S."/>
        </authorList>
    </citation>
    <scope>NUCLEOTIDE SEQUENCE [GENOMIC DNA]</scope>
    <source>
        <strain>ATCC BAA-98 / CGA009</strain>
    </source>
</reference>
<reference key="2">
    <citation type="journal article" date="2004" name="Nat. Biotechnol.">
        <title>Complete genome sequence of the metabolically versatile photosynthetic bacterium Rhodopseudomonas palustris.</title>
        <authorList>
            <person name="Larimer F.W."/>
            <person name="Chain P."/>
            <person name="Hauser L."/>
            <person name="Lamerdin J.E."/>
            <person name="Malfatti S."/>
            <person name="Do L."/>
            <person name="Land M.L."/>
            <person name="Pelletier D.A."/>
            <person name="Beatty J.T."/>
            <person name="Lang A.S."/>
            <person name="Tabita F.R."/>
            <person name="Gibson J.L."/>
            <person name="Hanson T.E."/>
            <person name="Bobst C."/>
            <person name="Torres y Torres J.L."/>
            <person name="Peres C."/>
            <person name="Harrison F.H."/>
            <person name="Gibson J."/>
            <person name="Harwood C.S."/>
        </authorList>
    </citation>
    <scope>NUCLEOTIDE SEQUENCE [LARGE SCALE GENOMIC DNA]</scope>
    <source>
        <strain>ATCC BAA-98 / CGA009</strain>
    </source>
</reference>
<organism>
    <name type="scientific">Rhodopseudomonas palustris (strain ATCC BAA-98 / CGA009)</name>
    <dbReference type="NCBI Taxonomy" id="258594"/>
    <lineage>
        <taxon>Bacteria</taxon>
        <taxon>Pseudomonadati</taxon>
        <taxon>Pseudomonadota</taxon>
        <taxon>Alphaproteobacteria</taxon>
        <taxon>Hyphomicrobiales</taxon>
        <taxon>Nitrobacteraceae</taxon>
        <taxon>Rhodopseudomonas</taxon>
    </lineage>
</organism>
<protein>
    <recommendedName>
        <fullName>Putative HTH-type transcriptional regulator BadM</fullName>
    </recommendedName>
</protein>
<sequence length="156" mass="17066">MPMRLQKSTMCGLYAVLELAANPDRQVSAGDIADKYDISLNHLAKVLRALVRARLIESVRGPGGGYRFAGNPKRVTLLDIIALFEDTGLDLQEAASDDHEESRALHKVLRDIDEIAMTTLRSVSITSLLKVIDTERRKTERGPNGASARHSSAGRA</sequence>
<keyword id="KW-0238">DNA-binding</keyword>
<name>BADM_RHOPA</name>
<gene>
    <name type="primary">badM</name>
    <name type="ordered locus">RPA0663</name>
</gene>
<proteinExistence type="predicted"/>
<evidence type="ECO:0000255" key="1">
    <source>
        <dbReference type="PROSITE-ProRule" id="PRU00540"/>
    </source>
</evidence>
<evidence type="ECO:0000256" key="2">
    <source>
        <dbReference type="SAM" id="MobiDB-lite"/>
    </source>
</evidence>